<gene>
    <name evidence="1" type="primary">rpsM</name>
    <name type="ordered locus">Cla_0092</name>
</gene>
<accession>B9KEH3</accession>
<organism>
    <name type="scientific">Campylobacter lari (strain RM2100 / D67 / ATCC BAA-1060)</name>
    <dbReference type="NCBI Taxonomy" id="306263"/>
    <lineage>
        <taxon>Bacteria</taxon>
        <taxon>Pseudomonadati</taxon>
        <taxon>Campylobacterota</taxon>
        <taxon>Epsilonproteobacteria</taxon>
        <taxon>Campylobacterales</taxon>
        <taxon>Campylobacteraceae</taxon>
        <taxon>Campylobacter</taxon>
    </lineage>
</organism>
<comment type="function">
    <text evidence="1">Located at the top of the head of the 30S subunit, it contacts several helices of the 16S rRNA. In the 70S ribosome it contacts the 23S rRNA (bridge B1a) and protein L5 of the 50S subunit (bridge B1b), connecting the 2 subunits; these bridges are implicated in subunit movement. Contacts the tRNAs in the A and P-sites.</text>
</comment>
<comment type="subunit">
    <text evidence="1">Part of the 30S ribosomal subunit. Forms a loose heterodimer with protein S19. Forms two bridges to the 50S subunit in the 70S ribosome.</text>
</comment>
<comment type="similarity">
    <text evidence="1">Belongs to the universal ribosomal protein uS13 family.</text>
</comment>
<evidence type="ECO:0000255" key="1">
    <source>
        <dbReference type="HAMAP-Rule" id="MF_01315"/>
    </source>
</evidence>
<evidence type="ECO:0000256" key="2">
    <source>
        <dbReference type="SAM" id="MobiDB-lite"/>
    </source>
</evidence>
<evidence type="ECO:0000305" key="3"/>
<proteinExistence type="inferred from homology"/>
<sequence>MARIAGVDLPKKKRIEYGLTYIYGIGLHTSRKILDKTGISYDKRVHELSEDEAAAIRKEIQENYMVEGDLRKQVAMDIKALMDLGSFRGLRHRKGLPVRGQKTKTNARTRKGKRKTVGAKS</sequence>
<keyword id="KW-1185">Reference proteome</keyword>
<keyword id="KW-0687">Ribonucleoprotein</keyword>
<keyword id="KW-0689">Ribosomal protein</keyword>
<keyword id="KW-0694">RNA-binding</keyword>
<keyword id="KW-0699">rRNA-binding</keyword>
<keyword id="KW-0820">tRNA-binding</keyword>
<protein>
    <recommendedName>
        <fullName evidence="1">Small ribosomal subunit protein uS13</fullName>
    </recommendedName>
    <alternativeName>
        <fullName evidence="3">30S ribosomal protein S13</fullName>
    </alternativeName>
</protein>
<feature type="chain" id="PRO_1000165608" description="Small ribosomal subunit protein uS13">
    <location>
        <begin position="1"/>
        <end position="121"/>
    </location>
</feature>
<feature type="region of interest" description="Disordered" evidence="2">
    <location>
        <begin position="93"/>
        <end position="121"/>
    </location>
</feature>
<reference key="1">
    <citation type="journal article" date="2008" name="Foodborne Pathog. Dis.">
        <title>The complete genome sequence and analysis of the human pathogen Campylobacter lari.</title>
        <authorList>
            <person name="Miller W.G."/>
            <person name="Wang G."/>
            <person name="Binnewies T.T."/>
            <person name="Parker C.T."/>
        </authorList>
    </citation>
    <scope>NUCLEOTIDE SEQUENCE [LARGE SCALE GENOMIC DNA]</scope>
    <source>
        <strain>RM2100 / D67 / ATCC BAA-1060</strain>
    </source>
</reference>
<name>RS13_CAMLR</name>
<dbReference type="EMBL" id="CP000932">
    <property type="protein sequence ID" value="ACM63458.1"/>
    <property type="molecule type" value="Genomic_DNA"/>
</dbReference>
<dbReference type="RefSeq" id="WP_012660843.1">
    <property type="nucleotide sequence ID" value="NC_012039.1"/>
</dbReference>
<dbReference type="SMR" id="B9KEH3"/>
<dbReference type="STRING" id="306263.Cla_0092"/>
<dbReference type="GeneID" id="93004188"/>
<dbReference type="KEGG" id="cla:CLA_0092"/>
<dbReference type="eggNOG" id="COG0099">
    <property type="taxonomic scope" value="Bacteria"/>
</dbReference>
<dbReference type="HOGENOM" id="CLU_103849_1_2_7"/>
<dbReference type="Proteomes" id="UP000007727">
    <property type="component" value="Chromosome"/>
</dbReference>
<dbReference type="GO" id="GO:0005829">
    <property type="term" value="C:cytosol"/>
    <property type="evidence" value="ECO:0007669"/>
    <property type="project" value="TreeGrafter"/>
</dbReference>
<dbReference type="GO" id="GO:0015935">
    <property type="term" value="C:small ribosomal subunit"/>
    <property type="evidence" value="ECO:0007669"/>
    <property type="project" value="TreeGrafter"/>
</dbReference>
<dbReference type="GO" id="GO:0019843">
    <property type="term" value="F:rRNA binding"/>
    <property type="evidence" value="ECO:0007669"/>
    <property type="project" value="UniProtKB-UniRule"/>
</dbReference>
<dbReference type="GO" id="GO:0003735">
    <property type="term" value="F:structural constituent of ribosome"/>
    <property type="evidence" value="ECO:0007669"/>
    <property type="project" value="InterPro"/>
</dbReference>
<dbReference type="GO" id="GO:0000049">
    <property type="term" value="F:tRNA binding"/>
    <property type="evidence" value="ECO:0007669"/>
    <property type="project" value="UniProtKB-UniRule"/>
</dbReference>
<dbReference type="GO" id="GO:0006412">
    <property type="term" value="P:translation"/>
    <property type="evidence" value="ECO:0007669"/>
    <property type="project" value="UniProtKB-UniRule"/>
</dbReference>
<dbReference type="FunFam" id="1.10.8.50:FF:000001">
    <property type="entry name" value="30S ribosomal protein S13"/>
    <property type="match status" value="1"/>
</dbReference>
<dbReference type="FunFam" id="4.10.910.10:FF:000001">
    <property type="entry name" value="30S ribosomal protein S13"/>
    <property type="match status" value="1"/>
</dbReference>
<dbReference type="Gene3D" id="1.10.8.50">
    <property type="match status" value="1"/>
</dbReference>
<dbReference type="Gene3D" id="4.10.910.10">
    <property type="entry name" value="30s ribosomal protein s13, domain 2"/>
    <property type="match status" value="1"/>
</dbReference>
<dbReference type="HAMAP" id="MF_01315">
    <property type="entry name" value="Ribosomal_uS13"/>
    <property type="match status" value="1"/>
</dbReference>
<dbReference type="InterPro" id="IPR027437">
    <property type="entry name" value="Rbsml_uS13_C"/>
</dbReference>
<dbReference type="InterPro" id="IPR001892">
    <property type="entry name" value="Ribosomal_uS13"/>
</dbReference>
<dbReference type="InterPro" id="IPR010979">
    <property type="entry name" value="Ribosomal_uS13-like_H2TH"/>
</dbReference>
<dbReference type="InterPro" id="IPR019980">
    <property type="entry name" value="Ribosomal_uS13_bac-type"/>
</dbReference>
<dbReference type="InterPro" id="IPR018269">
    <property type="entry name" value="Ribosomal_uS13_CS"/>
</dbReference>
<dbReference type="NCBIfam" id="TIGR03631">
    <property type="entry name" value="uS13_bact"/>
    <property type="match status" value="1"/>
</dbReference>
<dbReference type="PANTHER" id="PTHR10871">
    <property type="entry name" value="30S RIBOSOMAL PROTEIN S13/40S RIBOSOMAL PROTEIN S18"/>
    <property type="match status" value="1"/>
</dbReference>
<dbReference type="PANTHER" id="PTHR10871:SF1">
    <property type="entry name" value="SMALL RIBOSOMAL SUBUNIT PROTEIN US13M"/>
    <property type="match status" value="1"/>
</dbReference>
<dbReference type="Pfam" id="PF00416">
    <property type="entry name" value="Ribosomal_S13"/>
    <property type="match status" value="1"/>
</dbReference>
<dbReference type="PIRSF" id="PIRSF002134">
    <property type="entry name" value="Ribosomal_S13"/>
    <property type="match status" value="1"/>
</dbReference>
<dbReference type="SUPFAM" id="SSF46946">
    <property type="entry name" value="S13-like H2TH domain"/>
    <property type="match status" value="1"/>
</dbReference>
<dbReference type="PROSITE" id="PS00646">
    <property type="entry name" value="RIBOSOMAL_S13_1"/>
    <property type="match status" value="1"/>
</dbReference>
<dbReference type="PROSITE" id="PS50159">
    <property type="entry name" value="RIBOSOMAL_S13_2"/>
    <property type="match status" value="1"/>
</dbReference>